<reference key="1">
    <citation type="submission" date="1998-09" db="EMBL/GenBank/DDBJ databases">
        <title>Tyrosine decarboxylase (eli5) from Arabidopsis thaliana, cloning and expression analysis.</title>
        <authorList>
            <person name="Nass N."/>
            <person name="Koehler C."/>
            <person name="Scheel D."/>
        </authorList>
    </citation>
    <scope>NUCLEOTIDE SEQUENCE [MRNA]</scope>
    <scope>NUCLEOTIDE SEQUENCE [GENOMIC DNA] OF 1-394</scope>
    <source>
        <strain>cv. Columbia</strain>
    </source>
</reference>
<reference key="2">
    <citation type="journal article" date="2011" name="Plant J.">
        <title>Role of aromatic aldehyde synthase in wounding/herbivory response and flower scent production in different Arabidopsis ecotypes.</title>
        <authorList>
            <person name="Gutensohn M."/>
            <person name="Klempien A."/>
            <person name="Kaminaga Y."/>
            <person name="Nagegowda D.A."/>
            <person name="Negre-Zakharov F."/>
            <person name="Huh J.H."/>
            <person name="Luo H."/>
            <person name="Weizbauer R."/>
            <person name="Mengiste T."/>
            <person name="Tholl D."/>
            <person name="Dudareva N."/>
        </authorList>
    </citation>
    <scope>NUCLEOTIDE SEQUENCE [MRNA]</scope>
    <scope>FUNCTION</scope>
    <scope>CATALYTIC ACTIVITY</scope>
    <scope>COFACTOR</scope>
    <scope>BIOPHYSICOCHEMICAL PROPERTIES</scope>
    <scope>SUBUNIT</scope>
    <scope>TISSUE SPECIFICITY</scope>
    <scope>INDUCTION</scope>
</reference>
<reference key="3">
    <citation type="journal article" date="1999" name="Nature">
        <title>Sequence and analysis of chromosome 2 of the plant Arabidopsis thaliana.</title>
        <authorList>
            <person name="Lin X."/>
            <person name="Kaul S."/>
            <person name="Rounsley S.D."/>
            <person name="Shea T.P."/>
            <person name="Benito M.-I."/>
            <person name="Town C.D."/>
            <person name="Fujii C.Y."/>
            <person name="Mason T.M."/>
            <person name="Bowman C.L."/>
            <person name="Barnstead M.E."/>
            <person name="Feldblyum T.V."/>
            <person name="Buell C.R."/>
            <person name="Ketchum K.A."/>
            <person name="Lee J.J."/>
            <person name="Ronning C.M."/>
            <person name="Koo H.L."/>
            <person name="Moffat K.S."/>
            <person name="Cronin L.A."/>
            <person name="Shen M."/>
            <person name="Pai G."/>
            <person name="Van Aken S."/>
            <person name="Umayam L."/>
            <person name="Tallon L.J."/>
            <person name="Gill J.E."/>
            <person name="Adams M.D."/>
            <person name="Carrera A.J."/>
            <person name="Creasy T.H."/>
            <person name="Goodman H.M."/>
            <person name="Somerville C.R."/>
            <person name="Copenhaver G.P."/>
            <person name="Preuss D."/>
            <person name="Nierman W.C."/>
            <person name="White O."/>
            <person name="Eisen J.A."/>
            <person name="Salzberg S.L."/>
            <person name="Fraser C.M."/>
            <person name="Venter J.C."/>
        </authorList>
    </citation>
    <scope>NUCLEOTIDE SEQUENCE [LARGE SCALE GENOMIC DNA]</scope>
    <source>
        <strain>cv. Columbia</strain>
    </source>
</reference>
<reference key="4">
    <citation type="journal article" date="2017" name="Plant J.">
        <title>Araport11: a complete reannotation of the Arabidopsis thaliana reference genome.</title>
        <authorList>
            <person name="Cheng C.Y."/>
            <person name="Krishnakumar V."/>
            <person name="Chan A.P."/>
            <person name="Thibaud-Nissen F."/>
            <person name="Schobel S."/>
            <person name="Town C.D."/>
        </authorList>
    </citation>
    <scope>GENOME REANNOTATION</scope>
    <source>
        <strain>cv. Columbia</strain>
    </source>
</reference>
<reference key="5">
    <citation type="journal article" date="2003" name="Science">
        <title>Empirical analysis of transcriptional activity in the Arabidopsis genome.</title>
        <authorList>
            <person name="Yamada K."/>
            <person name="Lim J."/>
            <person name="Dale J.M."/>
            <person name="Chen H."/>
            <person name="Shinn P."/>
            <person name="Palm C.J."/>
            <person name="Southwick A.M."/>
            <person name="Wu H.C."/>
            <person name="Kim C.J."/>
            <person name="Nguyen M."/>
            <person name="Pham P.K."/>
            <person name="Cheuk R.F."/>
            <person name="Karlin-Newmann G."/>
            <person name="Liu S.X."/>
            <person name="Lam B."/>
            <person name="Sakano H."/>
            <person name="Wu T."/>
            <person name="Yu G."/>
            <person name="Miranda M."/>
            <person name="Quach H.L."/>
            <person name="Tripp M."/>
            <person name="Chang C.H."/>
            <person name="Lee J.M."/>
            <person name="Toriumi M.J."/>
            <person name="Chan M.M."/>
            <person name="Tang C.C."/>
            <person name="Onodera C.S."/>
            <person name="Deng J.M."/>
            <person name="Akiyama K."/>
            <person name="Ansari Y."/>
            <person name="Arakawa T."/>
            <person name="Banh J."/>
            <person name="Banno F."/>
            <person name="Bowser L."/>
            <person name="Brooks S.Y."/>
            <person name="Carninci P."/>
            <person name="Chao Q."/>
            <person name="Choy N."/>
            <person name="Enju A."/>
            <person name="Goldsmith A.D."/>
            <person name="Gurjal M."/>
            <person name="Hansen N.F."/>
            <person name="Hayashizaki Y."/>
            <person name="Johnson-Hopson C."/>
            <person name="Hsuan V.W."/>
            <person name="Iida K."/>
            <person name="Karnes M."/>
            <person name="Khan S."/>
            <person name="Koesema E."/>
            <person name="Ishida J."/>
            <person name="Jiang P.X."/>
            <person name="Jones T."/>
            <person name="Kawai J."/>
            <person name="Kamiya A."/>
            <person name="Meyers C."/>
            <person name="Nakajima M."/>
            <person name="Narusaka M."/>
            <person name="Seki M."/>
            <person name="Sakurai T."/>
            <person name="Satou M."/>
            <person name="Tamse R."/>
            <person name="Vaysberg M."/>
            <person name="Wallender E.K."/>
            <person name="Wong C."/>
            <person name="Yamamura Y."/>
            <person name="Yuan S."/>
            <person name="Shinozaki K."/>
            <person name="Davis R.W."/>
            <person name="Theologis A."/>
            <person name="Ecker J.R."/>
        </authorList>
    </citation>
    <scope>NUCLEOTIDE SEQUENCE [LARGE SCALE MRNA]</scope>
    <source>
        <strain>cv. Columbia</strain>
    </source>
</reference>
<reference key="6">
    <citation type="journal article" date="2013" name="J. Biol. Chem.">
        <title>Biochemical evaluation of the decarboxylation and decarboxylation-deamination activities of plant aromatic amino acid decarboxylases.</title>
        <authorList>
            <person name="Torrens-Spence M.P."/>
            <person name="Liu P."/>
            <person name="Ding H."/>
            <person name="Harich K."/>
            <person name="Gillaspy G."/>
            <person name="Li J."/>
        </authorList>
    </citation>
    <scope>FUNCTION</scope>
    <scope>CATALYTIC ACTIVITY</scope>
    <scope>BIOPHYSICOCHEMICAL PROPERTIES</scope>
    <scope>MUTAGENESIS OF PHE-338</scope>
</reference>
<reference key="7">
    <citation type="journal article" date="2020" name="Proc. Natl. Acad. Sci. U.S.A.">
        <title>Structural basis for divergent and convergent evolution of catalytic machineries in plant aromatic amino acid decarboxylase proteins.</title>
        <authorList>
            <person name="Torrens-Spence M.P."/>
            <person name="Chiang Y.-C."/>
            <person name="Smith T."/>
            <person name="Vicent M.A."/>
            <person name="Wang Y."/>
            <person name="Weng J.-K."/>
        </authorList>
    </citation>
    <scope>X-RAY CRYSTALLOGRAPHY (1.99 ANGSTROMS) IN COMPLEX WITH L-PHENYLALANINE AND PYRIDOXAL PHOSPHATE</scope>
    <scope>SUBUNIT</scope>
</reference>
<protein>
    <recommendedName>
        <fullName evidence="7">Phenylacetaldehyde synthase</fullName>
        <shortName evidence="5 6">AtPAAS</shortName>
        <ecNumber evidence="1 2">4.1.1.109</ecNumber>
    </recommendedName>
    <alternativeName>
        <fullName evidence="7">3,4-dihydroxyphenylacetaldehyde synthase</fullName>
        <shortName evidence="7">DHPAA synthase</shortName>
        <ecNumber evidence="1">4.1.1.107</ecNumber>
    </alternativeName>
    <alternativeName>
        <fullName evidence="4">Aromatic L-amino acid decarboxylase</fullName>
    </alternativeName>
    <alternativeName>
        <fullName evidence="4">Aromatic aldehyde synthase</fullName>
        <shortName evidence="4">AtAAS</shortName>
    </alternativeName>
</protein>
<evidence type="ECO:0000269" key="1">
    <source>
    </source>
</evidence>
<evidence type="ECO:0000269" key="2">
    <source>
    </source>
</evidence>
<evidence type="ECO:0000269" key="3">
    <source>
    </source>
</evidence>
<evidence type="ECO:0000303" key="4">
    <source>
    </source>
</evidence>
<evidence type="ECO:0000303" key="5">
    <source>
    </source>
</evidence>
<evidence type="ECO:0000303" key="6">
    <source>
    </source>
</evidence>
<evidence type="ECO:0000305" key="7"/>
<evidence type="ECO:0000312" key="8">
    <source>
        <dbReference type="Araport" id="AT2G20340"/>
    </source>
</evidence>
<evidence type="ECO:0000312" key="9">
    <source>
        <dbReference type="EMBL" id="AAD21754.1"/>
    </source>
</evidence>
<evidence type="ECO:0000312" key="10">
    <source>
        <dbReference type="EMBL" id="CAB56038.1"/>
    </source>
</evidence>
<evidence type="ECO:0007744" key="11">
    <source>
        <dbReference type="PDB" id="6EEI"/>
    </source>
</evidence>
<evidence type="ECO:0007829" key="12">
    <source>
        <dbReference type="PDB" id="6EEI"/>
    </source>
</evidence>
<sequence>MENGSGKVLKPMDSEQLREYGHLMVDFIADYYKTIEDFPVLSQVQPGYLHKLLPDSAPDHPETLDQVLDDVRAKILPGVTHWQSPSFFAYYPSNSSVAGFLGEMLSAGLGIVGFSWVTSPAATELEMIVLDWVAKLLNLPEQFMSKGNGGGVIQGSASEAVLVVLIAARDKVLRSVGKNALEKLVVYSSDQTHSALQKACQIAGIHPENCRVLTTDSSTNYALRPESLQEAVSRDLEAGLIPFFLCANVGTTSSTAVDPLAALGKIANSNGIWFHVDAAYAGSACICPEYRQYIDGVETADSFNMNAHKWFLTNFDCSLLWVKDQDSLTLALSTNPEFLKNKASQANLVVDYKDWQIPLGRRFRSLKLWMVLRLYGSETLKSYIRNHIKLAKEFEQLVSQDPNFEIVTPRIFALVCFRLVPVKDEEKKCNNRNRELLDAVNSSGKLFMSHTALSGKIVLRCAIGAPLTEEKHVKEAWKIIQEEASYLLHK</sequence>
<accession>Q8RY79</accession>
<accession>F6L7A0</accession>
<accession>Q9SK68</accession>
<accession>Q9SMY2</accession>
<accession>Q9SMY3</accession>
<comment type="function">
    <text evidence="1 2">Bifunctional enzyme that catalyzes the decarboxylation of L-phenylalanine to 2-phenylethylamine, which is then oxidized to form 2-phenylacetaldehyde, a constituent of floral scent (PubMed:21284755, PubMed:23204519). 2-phenylacetaldehyde is a precursor of 2-phenylethanol, another constituent of floral scent (PubMed:21284755). Catalyzes both the decarboxylation and deamination of L-dopa to 3,4-dihydroxylphenylacetaldehyde (DHPAA) (PubMed:21284755).</text>
</comment>
<comment type="catalytic activity">
    <reaction evidence="1 2">
        <text>L-phenylalanine + O2 + H2O + H(+) = 2-phenylacetaldehyde + H2O2 + NH4(+) + CO2</text>
        <dbReference type="Rhea" id="RHEA:55532"/>
        <dbReference type="ChEBI" id="CHEBI:15377"/>
        <dbReference type="ChEBI" id="CHEBI:15378"/>
        <dbReference type="ChEBI" id="CHEBI:15379"/>
        <dbReference type="ChEBI" id="CHEBI:16240"/>
        <dbReference type="ChEBI" id="CHEBI:16424"/>
        <dbReference type="ChEBI" id="CHEBI:16526"/>
        <dbReference type="ChEBI" id="CHEBI:28938"/>
        <dbReference type="ChEBI" id="CHEBI:58095"/>
        <dbReference type="EC" id="4.1.1.109"/>
    </reaction>
    <physiologicalReaction direction="left-to-right" evidence="1">
        <dbReference type="Rhea" id="RHEA:55533"/>
    </physiologicalReaction>
</comment>
<comment type="catalytic activity">
    <reaction evidence="1">
        <text>L-dopa + O2 + H2O + H(+) = 3,4-dihydroxyphenylacetaldehyde + H2O2 + NH4(+) + CO2</text>
        <dbReference type="Rhea" id="RHEA:55524"/>
        <dbReference type="ChEBI" id="CHEBI:15377"/>
        <dbReference type="ChEBI" id="CHEBI:15378"/>
        <dbReference type="ChEBI" id="CHEBI:15379"/>
        <dbReference type="ChEBI" id="CHEBI:16240"/>
        <dbReference type="ChEBI" id="CHEBI:16526"/>
        <dbReference type="ChEBI" id="CHEBI:27978"/>
        <dbReference type="ChEBI" id="CHEBI:28938"/>
        <dbReference type="ChEBI" id="CHEBI:57504"/>
        <dbReference type="EC" id="4.1.1.107"/>
    </reaction>
    <physiologicalReaction direction="left-to-right" evidence="1">
        <dbReference type="Rhea" id="RHEA:55525"/>
    </physiologicalReaction>
</comment>
<comment type="cofactor">
    <cofactor evidence="1">
        <name>pyridoxal 5'-phosphate</name>
        <dbReference type="ChEBI" id="CHEBI:597326"/>
    </cofactor>
</comment>
<comment type="biophysicochemical properties">
    <kinetics>
        <KM evidence="1">4.2 mM for L-phenylalanine</KM>
        <KM evidence="2">5.1 mM for L-phenylalanine</KM>
        <KM evidence="1">0.55 mM for L-dopa</KM>
        <Vmax evidence="1">449.6 pmol/sec/mg enzyme with L-phenylalanine as substrate</Vmax>
        <Vmax evidence="2">112.0 nmol/min/mg enzyme with L-phenylalanine as substrate</Vmax>
        <Vmax evidence="1">956.3 pmol/sec/mg enzyme with L-dopa as substrate</Vmax>
    </kinetics>
</comment>
<comment type="subunit">
    <text evidence="1 3">Homodimer.</text>
</comment>
<comment type="tissue specificity">
    <text evidence="1">Expressed in roots, rosette leaves, stems, cauline leaves and flowers.</text>
</comment>
<comment type="induction">
    <text evidence="1">Induced by wounding and methyl jasmonate in leaves.</text>
</comment>
<comment type="similarity">
    <text evidence="7">Belongs to the group II decarboxylase family.</text>
</comment>
<comment type="sequence caution" evidence="7">
    <conflict type="erroneous gene model prediction">
        <sequence resource="EMBL-CDS" id="AAD21754"/>
    </conflict>
</comment>
<gene>
    <name evidence="10" type="primary">ELI5</name>
    <name evidence="4" type="synonym">AADC</name>
    <name evidence="4" type="synonym">AAS</name>
    <name evidence="8" type="ordered locus">At2g20340</name>
    <name evidence="9" type="ORF">F11A3.11</name>
</gene>
<organism>
    <name type="scientific">Arabidopsis thaliana</name>
    <name type="common">Mouse-ear cress</name>
    <dbReference type="NCBI Taxonomy" id="3702"/>
    <lineage>
        <taxon>Eukaryota</taxon>
        <taxon>Viridiplantae</taxon>
        <taxon>Streptophyta</taxon>
        <taxon>Embryophyta</taxon>
        <taxon>Tracheophyta</taxon>
        <taxon>Spermatophyta</taxon>
        <taxon>Magnoliopsida</taxon>
        <taxon>eudicotyledons</taxon>
        <taxon>Gunneridae</taxon>
        <taxon>Pentapetalae</taxon>
        <taxon>rosids</taxon>
        <taxon>malvids</taxon>
        <taxon>Brassicales</taxon>
        <taxon>Brassicaceae</taxon>
        <taxon>Camelineae</taxon>
        <taxon>Arabidopsis</taxon>
    </lineage>
</organism>
<proteinExistence type="evidence at protein level"/>
<dbReference type="EC" id="4.1.1.109" evidence="1 2"/>
<dbReference type="EC" id="4.1.1.107" evidence="1"/>
<dbReference type="EMBL" id="AJ011048">
    <property type="protein sequence ID" value="CAB56119.1"/>
    <property type="molecule type" value="Genomic_DNA"/>
</dbReference>
<dbReference type="EMBL" id="AJ011049">
    <property type="protein sequence ID" value="CAB56038.1"/>
    <property type="molecule type" value="mRNA"/>
</dbReference>
<dbReference type="EMBL" id="HQ843094">
    <property type="protein sequence ID" value="ADV41492.1"/>
    <property type="molecule type" value="mRNA"/>
</dbReference>
<dbReference type="EMBL" id="AC006569">
    <property type="protein sequence ID" value="AAD21754.1"/>
    <property type="status" value="ALT_SEQ"/>
    <property type="molecule type" value="Genomic_DNA"/>
</dbReference>
<dbReference type="EMBL" id="CP002685">
    <property type="protein sequence ID" value="AEC06995.1"/>
    <property type="molecule type" value="Genomic_DNA"/>
</dbReference>
<dbReference type="EMBL" id="AY074539">
    <property type="protein sequence ID" value="AAL69507.1"/>
    <property type="molecule type" value="mRNA"/>
</dbReference>
<dbReference type="EMBL" id="AY096475">
    <property type="protein sequence ID" value="AAM20115.1"/>
    <property type="molecule type" value="mRNA"/>
</dbReference>
<dbReference type="PIR" id="A84588">
    <property type="entry name" value="A84588"/>
</dbReference>
<dbReference type="RefSeq" id="NP_849999.1">
    <property type="nucleotide sequence ID" value="NM_179668.2"/>
</dbReference>
<dbReference type="PDB" id="6EEI">
    <property type="method" value="X-ray"/>
    <property type="resolution" value="1.99 A"/>
    <property type="chains" value="A/B=1-490"/>
</dbReference>
<dbReference type="PDBsum" id="6EEI"/>
<dbReference type="SMR" id="Q8RY79"/>
<dbReference type="FunCoup" id="Q8RY79">
    <property type="interactions" value="130"/>
</dbReference>
<dbReference type="MINT" id="Q8RY79"/>
<dbReference type="STRING" id="3702.Q8RY79"/>
<dbReference type="iPTMnet" id="Q8RY79"/>
<dbReference type="PaxDb" id="3702-AT2G20340.1"/>
<dbReference type="ProteomicsDB" id="228613"/>
<dbReference type="EnsemblPlants" id="AT2G20340.1">
    <property type="protein sequence ID" value="AT2G20340.1"/>
    <property type="gene ID" value="AT2G20340"/>
</dbReference>
<dbReference type="GeneID" id="816553"/>
<dbReference type="Gramene" id="AT2G20340.1">
    <property type="protein sequence ID" value="AT2G20340.1"/>
    <property type="gene ID" value="AT2G20340"/>
</dbReference>
<dbReference type="KEGG" id="ath:AT2G20340"/>
<dbReference type="Araport" id="AT2G20340"/>
<dbReference type="TAIR" id="AT2G20340">
    <property type="gene designation" value="AAS"/>
</dbReference>
<dbReference type="eggNOG" id="KOG0628">
    <property type="taxonomic scope" value="Eukaryota"/>
</dbReference>
<dbReference type="HOGENOM" id="CLU_011856_3_1_1"/>
<dbReference type="InParanoid" id="Q8RY79"/>
<dbReference type="OMA" id="NPGFNWS"/>
<dbReference type="PhylomeDB" id="Q8RY79"/>
<dbReference type="BioCyc" id="ARA:AT2G20340-MONOMER"/>
<dbReference type="BRENDA" id="4.1.1.25">
    <property type="organism ID" value="399"/>
</dbReference>
<dbReference type="SABIO-RK" id="Q8RY79"/>
<dbReference type="PRO" id="PR:Q8RY79"/>
<dbReference type="Proteomes" id="UP000006548">
    <property type="component" value="Chromosome 2"/>
</dbReference>
<dbReference type="ExpressionAtlas" id="Q8RY79">
    <property type="expression patterns" value="baseline and differential"/>
</dbReference>
<dbReference type="GO" id="GO:0106425">
    <property type="term" value="F:3,4-dihydroxyphenylacetaldehyde synthase activity"/>
    <property type="evidence" value="ECO:0007669"/>
    <property type="project" value="UniProtKB-EC"/>
</dbReference>
<dbReference type="GO" id="GO:1990055">
    <property type="term" value="F:phenylacetaldehyde synthase activity"/>
    <property type="evidence" value="ECO:0000314"/>
    <property type="project" value="TAIR"/>
</dbReference>
<dbReference type="GO" id="GO:0030170">
    <property type="term" value="F:pyridoxal phosphate binding"/>
    <property type="evidence" value="ECO:0007669"/>
    <property type="project" value="InterPro"/>
</dbReference>
<dbReference type="GO" id="GO:0006559">
    <property type="term" value="P:L-phenylalanine catabolic process"/>
    <property type="evidence" value="ECO:0000314"/>
    <property type="project" value="TAIR"/>
</dbReference>
<dbReference type="GO" id="GO:0009611">
    <property type="term" value="P:response to wounding"/>
    <property type="evidence" value="ECO:0000270"/>
    <property type="project" value="TAIR"/>
</dbReference>
<dbReference type="CDD" id="cd06450">
    <property type="entry name" value="DOPA_deC_like"/>
    <property type="match status" value="1"/>
</dbReference>
<dbReference type="FunFam" id="1.20.1340.10:FF:000001">
    <property type="entry name" value="Histidine decarboxylase"/>
    <property type="match status" value="1"/>
</dbReference>
<dbReference type="FunFam" id="3.40.640.10:FF:000025">
    <property type="entry name" value="Histidine decarboxylase"/>
    <property type="match status" value="1"/>
</dbReference>
<dbReference type="FunFam" id="3.90.1150.10:FF:000018">
    <property type="entry name" value="Histidine decarboxylase"/>
    <property type="match status" value="1"/>
</dbReference>
<dbReference type="Gene3D" id="3.90.1150.10">
    <property type="entry name" value="Aspartate Aminotransferase, domain 1"/>
    <property type="match status" value="1"/>
</dbReference>
<dbReference type="Gene3D" id="1.20.1340.10">
    <property type="entry name" value="dopa decarboxylase, N-terminal domain"/>
    <property type="match status" value="1"/>
</dbReference>
<dbReference type="Gene3D" id="3.40.640.10">
    <property type="entry name" value="Type I PLP-dependent aspartate aminotransferase-like (Major domain)"/>
    <property type="match status" value="1"/>
</dbReference>
<dbReference type="InterPro" id="IPR010977">
    <property type="entry name" value="Aromatic_deC"/>
</dbReference>
<dbReference type="InterPro" id="IPR002129">
    <property type="entry name" value="PyrdxlP-dep_de-COase"/>
</dbReference>
<dbReference type="InterPro" id="IPR015424">
    <property type="entry name" value="PyrdxlP-dep_Trfase"/>
</dbReference>
<dbReference type="InterPro" id="IPR015421">
    <property type="entry name" value="PyrdxlP-dep_Trfase_major"/>
</dbReference>
<dbReference type="InterPro" id="IPR015422">
    <property type="entry name" value="PyrdxlP-dep_Trfase_small"/>
</dbReference>
<dbReference type="InterPro" id="IPR021115">
    <property type="entry name" value="Pyridoxal-P_BS"/>
</dbReference>
<dbReference type="PANTHER" id="PTHR11999">
    <property type="entry name" value="GROUP II PYRIDOXAL-5-PHOSPHATE DECARBOXYLASE"/>
    <property type="match status" value="1"/>
</dbReference>
<dbReference type="PANTHER" id="PTHR11999:SF70">
    <property type="entry name" value="MIP05841P"/>
    <property type="match status" value="1"/>
</dbReference>
<dbReference type="Pfam" id="PF00282">
    <property type="entry name" value="Pyridoxal_deC"/>
    <property type="match status" value="1"/>
</dbReference>
<dbReference type="PRINTS" id="PR00800">
    <property type="entry name" value="YHDCRBOXLASE"/>
</dbReference>
<dbReference type="SUPFAM" id="SSF53383">
    <property type="entry name" value="PLP-dependent transferases"/>
    <property type="match status" value="1"/>
</dbReference>
<dbReference type="PROSITE" id="PS00392">
    <property type="entry name" value="DDC_GAD_HDC_YDC"/>
    <property type="match status" value="1"/>
</dbReference>
<keyword id="KW-0002">3D-structure</keyword>
<keyword id="KW-0210">Decarboxylase</keyword>
<keyword id="KW-0456">Lyase</keyword>
<keyword id="KW-0663">Pyridoxal phosphate</keyword>
<keyword id="KW-1185">Reference proteome</keyword>
<feature type="chain" id="PRO_0000146993" description="Phenylacetaldehyde synthase">
    <location>
        <begin position="1"/>
        <end position="490"/>
    </location>
</feature>
<feature type="binding site" evidence="3 11">
    <location>
        <position position="92"/>
    </location>
    <ligand>
        <name>L-phenylalanine</name>
        <dbReference type="ChEBI" id="CHEBI:58095"/>
    </ligand>
</feature>
<feature type="binding site" evidence="3 11">
    <location>
        <position position="193"/>
    </location>
    <ligand>
        <name>L-phenylalanine</name>
        <dbReference type="ChEBI" id="CHEBI:58095"/>
    </ligand>
</feature>
<feature type="binding site" evidence="3 11">
    <location>
        <position position="308"/>
    </location>
    <ligand>
        <name>L-phenylalanine</name>
        <dbReference type="ChEBI" id="CHEBI:58095"/>
    </ligand>
</feature>
<feature type="binding site" evidence="3 11">
    <location>
        <position position="338"/>
    </location>
    <ligand>
        <name>L-phenylalanine</name>
        <dbReference type="ChEBI" id="CHEBI:58095"/>
    </ligand>
</feature>
<feature type="modified residue" description="N6-(pyridoxal phosphate)lysine" evidence="3">
    <location>
        <position position="309"/>
    </location>
</feature>
<feature type="mutagenesis site" description="Abolishes phenylacetaldehyde synthase activity." evidence="2">
    <original>F</original>
    <variation>Y</variation>
    <location>
        <position position="338"/>
    </location>
</feature>
<feature type="sequence conflict" description="In Ref. 1; CAB56119/CAB56038." evidence="7" ref="1">
    <original>WF</original>
    <variation>V</variation>
    <location>
        <begin position="273"/>
        <end position="274"/>
    </location>
</feature>
<feature type="sequence conflict" description="In Ref. 1; CAB56119." evidence="7" ref="1">
    <original>F</original>
    <variation>G</variation>
    <location>
        <position position="315"/>
    </location>
</feature>
<feature type="sequence conflict" description="In Ref. 1; CAB56119." evidence="7" ref="1">
    <original>E</original>
    <variation>Q</variation>
    <location>
        <position position="393"/>
    </location>
</feature>
<feature type="sequence conflict" description="In Ref. 1; CAB56038." evidence="7" ref="1">
    <original>A</original>
    <variation>D</variation>
    <location>
        <position position="452"/>
    </location>
</feature>
<feature type="sequence conflict" description="In Ref. 1; CAB56038." evidence="7" ref="1">
    <original>I</original>
    <variation>V</variation>
    <location>
        <position position="479"/>
    </location>
</feature>
<feature type="helix" evidence="12">
    <location>
        <begin position="14"/>
        <end position="33"/>
    </location>
</feature>
<feature type="helix" evidence="12">
    <location>
        <begin position="35"/>
        <end position="37"/>
    </location>
</feature>
<feature type="turn" evidence="12">
    <location>
        <begin position="46"/>
        <end position="52"/>
    </location>
</feature>
<feature type="helix" evidence="12">
    <location>
        <begin position="64"/>
        <end position="73"/>
    </location>
</feature>
<feature type="helix" evidence="12">
    <location>
        <begin position="76"/>
        <end position="78"/>
    </location>
</feature>
<feature type="strand" evidence="12">
    <location>
        <begin position="89"/>
        <end position="91"/>
    </location>
</feature>
<feature type="helix" evidence="12">
    <location>
        <begin position="97"/>
        <end position="109"/>
    </location>
</feature>
<feature type="strand" evidence="12">
    <location>
        <begin position="114"/>
        <end position="116"/>
    </location>
</feature>
<feature type="helix" evidence="12">
    <location>
        <begin position="120"/>
        <end position="136"/>
    </location>
</feature>
<feature type="helix" evidence="12">
    <location>
        <begin position="141"/>
        <end position="143"/>
    </location>
</feature>
<feature type="strand" evidence="12">
    <location>
        <begin position="150"/>
        <end position="155"/>
    </location>
</feature>
<feature type="helix" evidence="12">
    <location>
        <begin position="157"/>
        <end position="176"/>
    </location>
</feature>
<feature type="helix" evidence="12">
    <location>
        <begin position="178"/>
        <end position="183"/>
    </location>
</feature>
<feature type="strand" evidence="12">
    <location>
        <begin position="184"/>
        <end position="189"/>
    </location>
</feature>
<feature type="helix" evidence="12">
    <location>
        <begin position="194"/>
        <end position="203"/>
    </location>
</feature>
<feature type="helix" evidence="12">
    <location>
        <begin position="207"/>
        <end position="209"/>
    </location>
</feature>
<feature type="strand" evidence="12">
    <location>
        <begin position="210"/>
        <end position="213"/>
    </location>
</feature>
<feature type="helix" evidence="12">
    <location>
        <begin position="217"/>
        <end position="219"/>
    </location>
</feature>
<feature type="helix" evidence="12">
    <location>
        <begin position="225"/>
        <end position="237"/>
    </location>
</feature>
<feature type="strand" evidence="12">
    <location>
        <begin position="241"/>
        <end position="250"/>
    </location>
</feature>
<feature type="turn" evidence="12">
    <location>
        <begin position="252"/>
        <end position="254"/>
    </location>
</feature>
<feature type="helix" evidence="12">
    <location>
        <begin position="260"/>
        <end position="269"/>
    </location>
</feature>
<feature type="strand" evidence="12">
    <location>
        <begin position="273"/>
        <end position="277"/>
    </location>
</feature>
<feature type="helix" evidence="12">
    <location>
        <begin position="281"/>
        <end position="286"/>
    </location>
</feature>
<feature type="helix" evidence="12">
    <location>
        <begin position="288"/>
        <end position="291"/>
    </location>
</feature>
<feature type="helix" evidence="12">
    <location>
        <begin position="292"/>
        <end position="294"/>
    </location>
</feature>
<feature type="helix" evidence="12">
    <location>
        <begin position="297"/>
        <end position="299"/>
    </location>
</feature>
<feature type="strand" evidence="12">
    <location>
        <begin position="301"/>
        <end position="306"/>
    </location>
</feature>
<feature type="strand" evidence="12">
    <location>
        <begin position="318"/>
        <end position="323"/>
    </location>
</feature>
<feature type="helix" evidence="12">
    <location>
        <begin position="325"/>
        <end position="332"/>
    </location>
</feature>
<feature type="helix" evidence="12">
    <location>
        <begin position="352"/>
        <end position="355"/>
    </location>
</feature>
<feature type="strand" evidence="12">
    <location>
        <begin position="356"/>
        <end position="359"/>
    </location>
</feature>
<feature type="helix" evidence="12">
    <location>
        <begin position="365"/>
        <end position="400"/>
    </location>
</feature>
<feature type="strand" evidence="12">
    <location>
        <begin position="404"/>
        <end position="406"/>
    </location>
</feature>
<feature type="strand" evidence="12">
    <location>
        <begin position="412"/>
        <end position="419"/>
    </location>
</feature>
<feature type="helix" evidence="12">
    <location>
        <begin position="432"/>
        <end position="443"/>
    </location>
</feature>
<feature type="strand" evidence="12">
    <location>
        <begin position="449"/>
        <end position="453"/>
    </location>
</feature>
<feature type="strand" evidence="12">
    <location>
        <begin position="456"/>
        <end position="462"/>
    </location>
</feature>
<feature type="helix" evidence="12">
    <location>
        <begin position="470"/>
        <end position="488"/>
    </location>
</feature>
<name>PAAS_ARATH</name>